<name>SYFA_RICAH</name>
<accession>A8GND9</accession>
<evidence type="ECO:0000255" key="1">
    <source>
        <dbReference type="HAMAP-Rule" id="MF_00281"/>
    </source>
</evidence>
<organism>
    <name type="scientific">Rickettsia akari (strain Hartford)</name>
    <dbReference type="NCBI Taxonomy" id="293614"/>
    <lineage>
        <taxon>Bacteria</taxon>
        <taxon>Pseudomonadati</taxon>
        <taxon>Pseudomonadota</taxon>
        <taxon>Alphaproteobacteria</taxon>
        <taxon>Rickettsiales</taxon>
        <taxon>Rickettsiaceae</taxon>
        <taxon>Rickettsieae</taxon>
        <taxon>Rickettsia</taxon>
        <taxon>spotted fever group</taxon>
    </lineage>
</organism>
<comment type="catalytic activity">
    <reaction evidence="1">
        <text>tRNA(Phe) + L-phenylalanine + ATP = L-phenylalanyl-tRNA(Phe) + AMP + diphosphate + H(+)</text>
        <dbReference type="Rhea" id="RHEA:19413"/>
        <dbReference type="Rhea" id="RHEA-COMP:9668"/>
        <dbReference type="Rhea" id="RHEA-COMP:9699"/>
        <dbReference type="ChEBI" id="CHEBI:15378"/>
        <dbReference type="ChEBI" id="CHEBI:30616"/>
        <dbReference type="ChEBI" id="CHEBI:33019"/>
        <dbReference type="ChEBI" id="CHEBI:58095"/>
        <dbReference type="ChEBI" id="CHEBI:78442"/>
        <dbReference type="ChEBI" id="CHEBI:78531"/>
        <dbReference type="ChEBI" id="CHEBI:456215"/>
        <dbReference type="EC" id="6.1.1.20"/>
    </reaction>
</comment>
<comment type="cofactor">
    <cofactor evidence="1">
        <name>Mg(2+)</name>
        <dbReference type="ChEBI" id="CHEBI:18420"/>
    </cofactor>
    <text evidence="1">Binds 2 magnesium ions per tetramer.</text>
</comment>
<comment type="subunit">
    <text evidence="1">Tetramer of two alpha and two beta subunits.</text>
</comment>
<comment type="subcellular location">
    <subcellularLocation>
        <location evidence="1">Cytoplasm</location>
    </subcellularLocation>
</comment>
<comment type="similarity">
    <text evidence="1">Belongs to the class-II aminoacyl-tRNA synthetase family. Phe-tRNA synthetase alpha subunit type 1 subfamily.</text>
</comment>
<gene>
    <name evidence="1" type="primary">pheS</name>
    <name type="ordered locus">A1C_03140</name>
</gene>
<reference key="1">
    <citation type="submission" date="2007-09" db="EMBL/GenBank/DDBJ databases">
        <title>Complete genome sequence of Rickettsia akari.</title>
        <authorList>
            <person name="Madan A."/>
            <person name="Fahey J."/>
            <person name="Helton E."/>
            <person name="Ketteman M."/>
            <person name="Madan A."/>
            <person name="Rodrigues S."/>
            <person name="Sanchez A."/>
            <person name="Whiting M."/>
            <person name="Dasch G."/>
            <person name="Eremeeva M."/>
        </authorList>
    </citation>
    <scope>NUCLEOTIDE SEQUENCE [LARGE SCALE GENOMIC DNA]</scope>
    <source>
        <strain>Hartford</strain>
    </source>
</reference>
<protein>
    <recommendedName>
        <fullName evidence="1">Phenylalanine--tRNA ligase alpha subunit</fullName>
        <ecNumber evidence="1">6.1.1.20</ecNumber>
    </recommendedName>
    <alternativeName>
        <fullName evidence="1">Phenylalanyl-tRNA synthetase alpha subunit</fullName>
        <shortName evidence="1">PheRS</shortName>
    </alternativeName>
</protein>
<proteinExistence type="inferred from homology"/>
<feature type="chain" id="PRO_1000006885" description="Phenylalanine--tRNA ligase alpha subunit">
    <location>
        <begin position="1"/>
        <end position="349"/>
    </location>
</feature>
<feature type="binding site" evidence="1">
    <location>
        <position position="258"/>
    </location>
    <ligand>
        <name>Mg(2+)</name>
        <dbReference type="ChEBI" id="CHEBI:18420"/>
        <note>shared with beta subunit</note>
    </ligand>
</feature>
<dbReference type="EC" id="6.1.1.20" evidence="1"/>
<dbReference type="EMBL" id="CP000847">
    <property type="protein sequence ID" value="ABV74914.1"/>
    <property type="molecule type" value="Genomic_DNA"/>
</dbReference>
<dbReference type="RefSeq" id="WP_012149547.1">
    <property type="nucleotide sequence ID" value="NC_009881.1"/>
</dbReference>
<dbReference type="SMR" id="A8GND9"/>
<dbReference type="STRING" id="293614.A1C_03140"/>
<dbReference type="KEGG" id="rak:A1C_03140"/>
<dbReference type="eggNOG" id="COG0016">
    <property type="taxonomic scope" value="Bacteria"/>
</dbReference>
<dbReference type="HOGENOM" id="CLU_025086_0_1_5"/>
<dbReference type="Proteomes" id="UP000006830">
    <property type="component" value="Chromosome"/>
</dbReference>
<dbReference type="GO" id="GO:0005737">
    <property type="term" value="C:cytoplasm"/>
    <property type="evidence" value="ECO:0007669"/>
    <property type="project" value="UniProtKB-SubCell"/>
</dbReference>
<dbReference type="GO" id="GO:0005524">
    <property type="term" value="F:ATP binding"/>
    <property type="evidence" value="ECO:0007669"/>
    <property type="project" value="UniProtKB-UniRule"/>
</dbReference>
<dbReference type="GO" id="GO:0000287">
    <property type="term" value="F:magnesium ion binding"/>
    <property type="evidence" value="ECO:0007669"/>
    <property type="project" value="UniProtKB-UniRule"/>
</dbReference>
<dbReference type="GO" id="GO:0004826">
    <property type="term" value="F:phenylalanine-tRNA ligase activity"/>
    <property type="evidence" value="ECO:0007669"/>
    <property type="project" value="UniProtKB-UniRule"/>
</dbReference>
<dbReference type="GO" id="GO:0000049">
    <property type="term" value="F:tRNA binding"/>
    <property type="evidence" value="ECO:0007669"/>
    <property type="project" value="InterPro"/>
</dbReference>
<dbReference type="GO" id="GO:0006432">
    <property type="term" value="P:phenylalanyl-tRNA aminoacylation"/>
    <property type="evidence" value="ECO:0007669"/>
    <property type="project" value="UniProtKB-UniRule"/>
</dbReference>
<dbReference type="CDD" id="cd00496">
    <property type="entry name" value="PheRS_alpha_core"/>
    <property type="match status" value="1"/>
</dbReference>
<dbReference type="FunFam" id="3.30.930.10:FF:000003">
    <property type="entry name" value="Phenylalanine--tRNA ligase alpha subunit"/>
    <property type="match status" value="1"/>
</dbReference>
<dbReference type="Gene3D" id="3.30.930.10">
    <property type="entry name" value="Bira Bifunctional Protein, Domain 2"/>
    <property type="match status" value="1"/>
</dbReference>
<dbReference type="HAMAP" id="MF_00281">
    <property type="entry name" value="Phe_tRNA_synth_alpha1"/>
    <property type="match status" value="1"/>
</dbReference>
<dbReference type="InterPro" id="IPR006195">
    <property type="entry name" value="aa-tRNA-synth_II"/>
</dbReference>
<dbReference type="InterPro" id="IPR045864">
    <property type="entry name" value="aa-tRNA-synth_II/BPL/LPL"/>
</dbReference>
<dbReference type="InterPro" id="IPR004529">
    <property type="entry name" value="Phe-tRNA-synth_IIc_asu"/>
</dbReference>
<dbReference type="InterPro" id="IPR004188">
    <property type="entry name" value="Phe-tRNA_ligase_II_N"/>
</dbReference>
<dbReference type="InterPro" id="IPR022911">
    <property type="entry name" value="Phe_tRNA_ligase_alpha1_bac"/>
</dbReference>
<dbReference type="InterPro" id="IPR002319">
    <property type="entry name" value="Phenylalanyl-tRNA_Synthase"/>
</dbReference>
<dbReference type="InterPro" id="IPR010978">
    <property type="entry name" value="tRNA-bd_arm"/>
</dbReference>
<dbReference type="NCBIfam" id="TIGR00468">
    <property type="entry name" value="pheS"/>
    <property type="match status" value="1"/>
</dbReference>
<dbReference type="PANTHER" id="PTHR11538:SF41">
    <property type="entry name" value="PHENYLALANINE--TRNA LIGASE, MITOCHONDRIAL"/>
    <property type="match status" value="1"/>
</dbReference>
<dbReference type="PANTHER" id="PTHR11538">
    <property type="entry name" value="PHENYLALANYL-TRNA SYNTHETASE"/>
    <property type="match status" value="1"/>
</dbReference>
<dbReference type="Pfam" id="PF02912">
    <property type="entry name" value="Phe_tRNA-synt_N"/>
    <property type="match status" value="1"/>
</dbReference>
<dbReference type="Pfam" id="PF01409">
    <property type="entry name" value="tRNA-synt_2d"/>
    <property type="match status" value="1"/>
</dbReference>
<dbReference type="SUPFAM" id="SSF55681">
    <property type="entry name" value="Class II aaRS and biotin synthetases"/>
    <property type="match status" value="1"/>
</dbReference>
<dbReference type="SUPFAM" id="SSF46589">
    <property type="entry name" value="tRNA-binding arm"/>
    <property type="match status" value="1"/>
</dbReference>
<dbReference type="PROSITE" id="PS50862">
    <property type="entry name" value="AA_TRNA_LIGASE_II"/>
    <property type="match status" value="1"/>
</dbReference>
<keyword id="KW-0030">Aminoacyl-tRNA synthetase</keyword>
<keyword id="KW-0067">ATP-binding</keyword>
<keyword id="KW-0963">Cytoplasm</keyword>
<keyword id="KW-0436">Ligase</keyword>
<keyword id="KW-0460">Magnesium</keyword>
<keyword id="KW-0479">Metal-binding</keyword>
<keyword id="KW-0547">Nucleotide-binding</keyword>
<keyword id="KW-0648">Protein biosynthesis</keyword>
<sequence length="349" mass="40373">MENIETILRLAEEKILLVQNLKALQEYKVEFLGKNGIVTGELKKLGSLNEQERKEFGLKINKLKDKIQNIIRATEEILEEQELKLKLAADKIDLTIPARRYKQGSIHPITQCSEELIQVFSQFGFTIENGPNIENDFHNFTALNFEDDHPARQMHDTFYLKGQENNKPLLLRTHTSTVQIRAMKSGKPPFRFIAPGRTYRSDSDMTHTPMFHQIEGLVIDKNINMGHLKYVITEFIKNFFENSNIELRFRPSFFPFTEPSAEVDIRMNKHDKWLEVLGCGMVHPNVLKNVGIDSSEYQGVAFGLGVERFAMLKYNIKDLRQFFEGDMRWLKHYNFGSFDIPSLAGGLTK</sequence>